<protein>
    <recommendedName>
        <fullName evidence="1">Small ribosomal subunit protein uS4</fullName>
    </recommendedName>
    <alternativeName>
        <fullName evidence="3">30S ribosomal protein S4</fullName>
    </alternativeName>
</protein>
<name>RS4_BURL3</name>
<proteinExistence type="inferred from homology"/>
<organism>
    <name type="scientific">Burkholderia lata (strain ATCC 17760 / DSM 23089 / LMG 22485 / NCIMB 9086 / R18194 / 383)</name>
    <dbReference type="NCBI Taxonomy" id="482957"/>
    <lineage>
        <taxon>Bacteria</taxon>
        <taxon>Pseudomonadati</taxon>
        <taxon>Pseudomonadota</taxon>
        <taxon>Betaproteobacteria</taxon>
        <taxon>Burkholderiales</taxon>
        <taxon>Burkholderiaceae</taxon>
        <taxon>Burkholderia</taxon>
        <taxon>Burkholderia cepacia complex</taxon>
    </lineage>
</organism>
<gene>
    <name evidence="1" type="primary">rpsD</name>
    <name type="ordered locus">Bcep18194_A3472</name>
</gene>
<accession>Q39KE2</accession>
<reference key="1">
    <citation type="submission" date="2005-10" db="EMBL/GenBank/DDBJ databases">
        <title>Complete sequence of chromosome 1 of Burkholderia sp. 383.</title>
        <authorList>
            <consortium name="US DOE Joint Genome Institute"/>
            <person name="Copeland A."/>
            <person name="Lucas S."/>
            <person name="Lapidus A."/>
            <person name="Barry K."/>
            <person name="Detter J.C."/>
            <person name="Glavina T."/>
            <person name="Hammon N."/>
            <person name="Israni S."/>
            <person name="Pitluck S."/>
            <person name="Chain P."/>
            <person name="Malfatti S."/>
            <person name="Shin M."/>
            <person name="Vergez L."/>
            <person name="Schmutz J."/>
            <person name="Larimer F."/>
            <person name="Land M."/>
            <person name="Kyrpides N."/>
            <person name="Lykidis A."/>
            <person name="Richardson P."/>
        </authorList>
    </citation>
    <scope>NUCLEOTIDE SEQUENCE [LARGE SCALE GENOMIC DNA]</scope>
    <source>
        <strain>ATCC 17760 / DSM 23089 / LMG 22485 / NCIMB 9086 / R18194 / 383</strain>
    </source>
</reference>
<dbReference type="EMBL" id="CP000151">
    <property type="protein sequence ID" value="ABB07074.1"/>
    <property type="molecule type" value="Genomic_DNA"/>
</dbReference>
<dbReference type="RefSeq" id="WP_011350679.1">
    <property type="nucleotide sequence ID" value="NZ_WNDV01000034.1"/>
</dbReference>
<dbReference type="SMR" id="Q39KE2"/>
<dbReference type="GeneID" id="93143337"/>
<dbReference type="KEGG" id="bur:Bcep18194_A3472"/>
<dbReference type="PATRIC" id="fig|482957.22.peg.313"/>
<dbReference type="HOGENOM" id="CLU_092403_0_2_4"/>
<dbReference type="Proteomes" id="UP000002705">
    <property type="component" value="Chromosome 1"/>
</dbReference>
<dbReference type="GO" id="GO:0015935">
    <property type="term" value="C:small ribosomal subunit"/>
    <property type="evidence" value="ECO:0007669"/>
    <property type="project" value="InterPro"/>
</dbReference>
<dbReference type="GO" id="GO:0019843">
    <property type="term" value="F:rRNA binding"/>
    <property type="evidence" value="ECO:0007669"/>
    <property type="project" value="UniProtKB-UniRule"/>
</dbReference>
<dbReference type="GO" id="GO:0003735">
    <property type="term" value="F:structural constituent of ribosome"/>
    <property type="evidence" value="ECO:0007669"/>
    <property type="project" value="InterPro"/>
</dbReference>
<dbReference type="GO" id="GO:0042274">
    <property type="term" value="P:ribosomal small subunit biogenesis"/>
    <property type="evidence" value="ECO:0007669"/>
    <property type="project" value="TreeGrafter"/>
</dbReference>
<dbReference type="GO" id="GO:0006412">
    <property type="term" value="P:translation"/>
    <property type="evidence" value="ECO:0007669"/>
    <property type="project" value="UniProtKB-UniRule"/>
</dbReference>
<dbReference type="CDD" id="cd00165">
    <property type="entry name" value="S4"/>
    <property type="match status" value="1"/>
</dbReference>
<dbReference type="FunFam" id="1.10.1050.10:FF:000001">
    <property type="entry name" value="30S ribosomal protein S4"/>
    <property type="match status" value="1"/>
</dbReference>
<dbReference type="FunFam" id="3.10.290.10:FF:000001">
    <property type="entry name" value="30S ribosomal protein S4"/>
    <property type="match status" value="1"/>
</dbReference>
<dbReference type="Gene3D" id="1.10.1050.10">
    <property type="entry name" value="Ribosomal Protein S4 Delta 41, Chain A, domain 1"/>
    <property type="match status" value="1"/>
</dbReference>
<dbReference type="Gene3D" id="3.10.290.10">
    <property type="entry name" value="RNA-binding S4 domain"/>
    <property type="match status" value="1"/>
</dbReference>
<dbReference type="HAMAP" id="MF_01306_B">
    <property type="entry name" value="Ribosomal_uS4_B"/>
    <property type="match status" value="1"/>
</dbReference>
<dbReference type="InterPro" id="IPR022801">
    <property type="entry name" value="Ribosomal_uS4"/>
</dbReference>
<dbReference type="InterPro" id="IPR005709">
    <property type="entry name" value="Ribosomal_uS4_bac-type"/>
</dbReference>
<dbReference type="InterPro" id="IPR018079">
    <property type="entry name" value="Ribosomal_uS4_CS"/>
</dbReference>
<dbReference type="InterPro" id="IPR001912">
    <property type="entry name" value="Ribosomal_uS4_N"/>
</dbReference>
<dbReference type="InterPro" id="IPR002942">
    <property type="entry name" value="S4_RNA-bd"/>
</dbReference>
<dbReference type="InterPro" id="IPR036986">
    <property type="entry name" value="S4_RNA-bd_sf"/>
</dbReference>
<dbReference type="NCBIfam" id="NF003717">
    <property type="entry name" value="PRK05327.1"/>
    <property type="match status" value="1"/>
</dbReference>
<dbReference type="NCBIfam" id="TIGR01017">
    <property type="entry name" value="rpsD_bact"/>
    <property type="match status" value="1"/>
</dbReference>
<dbReference type="PANTHER" id="PTHR11831">
    <property type="entry name" value="30S 40S RIBOSOMAL PROTEIN"/>
    <property type="match status" value="1"/>
</dbReference>
<dbReference type="PANTHER" id="PTHR11831:SF4">
    <property type="entry name" value="SMALL RIBOSOMAL SUBUNIT PROTEIN US4M"/>
    <property type="match status" value="1"/>
</dbReference>
<dbReference type="Pfam" id="PF00163">
    <property type="entry name" value="Ribosomal_S4"/>
    <property type="match status" value="1"/>
</dbReference>
<dbReference type="Pfam" id="PF01479">
    <property type="entry name" value="S4"/>
    <property type="match status" value="1"/>
</dbReference>
<dbReference type="SMART" id="SM01390">
    <property type="entry name" value="Ribosomal_S4"/>
    <property type="match status" value="1"/>
</dbReference>
<dbReference type="SMART" id="SM00363">
    <property type="entry name" value="S4"/>
    <property type="match status" value="1"/>
</dbReference>
<dbReference type="SUPFAM" id="SSF55174">
    <property type="entry name" value="Alpha-L RNA-binding motif"/>
    <property type="match status" value="1"/>
</dbReference>
<dbReference type="PROSITE" id="PS00632">
    <property type="entry name" value="RIBOSOMAL_S4"/>
    <property type="match status" value="1"/>
</dbReference>
<dbReference type="PROSITE" id="PS50889">
    <property type="entry name" value="S4"/>
    <property type="match status" value="1"/>
</dbReference>
<evidence type="ECO:0000255" key="1">
    <source>
        <dbReference type="HAMAP-Rule" id="MF_01306"/>
    </source>
</evidence>
<evidence type="ECO:0000256" key="2">
    <source>
        <dbReference type="SAM" id="MobiDB-lite"/>
    </source>
</evidence>
<evidence type="ECO:0000305" key="3"/>
<sequence length="207" mass="23202">MARYIGPKAKLSRREGTDLFLKSARRSLADKCKLDSKPGQHGRTSGARTSDYGTQLREKQKVKRIYGVLERQFRRYFAEADRRKGNTGENLLQLLESRLDNVVYRMGFGSTRAEARQLVSHKSITVNGVVANVPSQQVKSGDVVAIREKAKKQARIVEALSLAEQGGMPSWVAVDAKKFEGTFKQMPERAEIAGDINESLIVELYSR</sequence>
<comment type="function">
    <text evidence="1">One of the primary rRNA binding proteins, it binds directly to 16S rRNA where it nucleates assembly of the body of the 30S subunit.</text>
</comment>
<comment type="function">
    <text evidence="1">With S5 and S12 plays an important role in translational accuracy.</text>
</comment>
<comment type="subunit">
    <text evidence="1">Part of the 30S ribosomal subunit. Contacts protein S5. The interaction surface between S4 and S5 is involved in control of translational fidelity.</text>
</comment>
<comment type="similarity">
    <text evidence="1">Belongs to the universal ribosomal protein uS4 family.</text>
</comment>
<feature type="chain" id="PRO_0000228882" description="Small ribosomal subunit protein uS4">
    <location>
        <begin position="1"/>
        <end position="207"/>
    </location>
</feature>
<feature type="domain" description="S4 RNA-binding" evidence="1">
    <location>
        <begin position="97"/>
        <end position="160"/>
    </location>
</feature>
<feature type="region of interest" description="Disordered" evidence="2">
    <location>
        <begin position="31"/>
        <end position="55"/>
    </location>
</feature>
<feature type="compositionally biased region" description="Polar residues" evidence="2">
    <location>
        <begin position="42"/>
        <end position="53"/>
    </location>
</feature>
<keyword id="KW-0687">Ribonucleoprotein</keyword>
<keyword id="KW-0689">Ribosomal protein</keyword>
<keyword id="KW-0694">RNA-binding</keyword>
<keyword id="KW-0699">rRNA-binding</keyword>